<sequence length="392" mass="41697">MKKKILASLLLSTVMVSQVAVLTTAHAETTDDKIAAQDNKISNLTAQQQEAQKQVDQIQEQVSAIQAEQSNLQAENDRLQAESKKLEGEITELSKNIVSRNQSLEKQARSAQTNGAVTSYINTIVNSKSITEAISRVAAMSEIVSANNKMLEQQKADKKAISEKQVANNDAINTVIANQQKLADDAQALTTKQAELKAAELSLAAEKATAEGEKASLLEQKAAAEAEARAAAVAEAAYKEKRASQQQSVLASANTNLTAQVQAVSESAAAPVRAKVRPTYSTNASSYPIGECTWGVKTLAPWAGDYWGNGAQWATSAAAAGFRTGSTPQVGAIACWNDGGYGHVAVVTAVESTTRIQVSESNYAGNRTIGNHRGWFNPTTTSEGFVTYIYAD</sequence>
<protein>
    <recommendedName>
        <fullName evidence="11">Peptidoglycan hydrolase PcsB</fullName>
        <ecNumber evidence="1">3.2.1.-</ecNumber>
    </recommendedName>
</protein>
<keyword id="KW-0002">3D-structure</keyword>
<keyword id="KW-1003">Cell membrane</keyword>
<keyword id="KW-0175">Coiled coil</keyword>
<keyword id="KW-0378">Hydrolase</keyword>
<keyword id="KW-0472">Membrane</keyword>
<keyword id="KW-1185">Reference proteome</keyword>
<keyword id="KW-0964">Secreted</keyword>
<keyword id="KW-0732">Signal</keyword>
<organism evidence="16">
    <name type="scientific">Streptococcus pneumoniae (strain ATCC BAA-255 / R6)</name>
    <dbReference type="NCBI Taxonomy" id="171101"/>
    <lineage>
        <taxon>Bacteria</taxon>
        <taxon>Bacillati</taxon>
        <taxon>Bacillota</taxon>
        <taxon>Bacilli</taxon>
        <taxon>Lactobacillales</taxon>
        <taxon>Streptococcaceae</taxon>
        <taxon>Streptococcus</taxon>
    </lineage>
</organism>
<name>PCSB_STRR6</name>
<accession>Q8DMY4</accession>
<evidence type="ECO:0000250" key="1">
    <source>
        <dbReference type="UniProtKB" id="A0A0H2ZQ76"/>
    </source>
</evidence>
<evidence type="ECO:0000255" key="2"/>
<evidence type="ECO:0000255" key="3">
    <source>
        <dbReference type="PROSITE-ProRule" id="PRU00048"/>
    </source>
</evidence>
<evidence type="ECO:0000269" key="4">
    <source>
    </source>
</evidence>
<evidence type="ECO:0000269" key="5">
    <source>
    </source>
</evidence>
<evidence type="ECO:0000269" key="6">
    <source>
    </source>
</evidence>
<evidence type="ECO:0000269" key="7">
    <source>
    </source>
</evidence>
<evidence type="ECO:0000269" key="8">
    <source>
    </source>
</evidence>
<evidence type="ECO:0000269" key="9">
    <source>
    </source>
</evidence>
<evidence type="ECO:0000303" key="10">
    <source>
    </source>
</evidence>
<evidence type="ECO:0000303" key="11">
    <source>
    </source>
</evidence>
<evidence type="ECO:0000303" key="12">
    <source>
    </source>
</evidence>
<evidence type="ECO:0000305" key="13"/>
<evidence type="ECO:0000305" key="14">
    <source>
    </source>
</evidence>
<evidence type="ECO:0000312" key="15">
    <source>
        <dbReference type="EMBL" id="AAL00823.1"/>
    </source>
</evidence>
<evidence type="ECO:0000312" key="16">
    <source>
        <dbReference type="Proteomes" id="UP000000586"/>
    </source>
</evidence>
<evidence type="ECO:0007829" key="17">
    <source>
        <dbReference type="PDB" id="4CGK"/>
    </source>
</evidence>
<dbReference type="EC" id="3.2.1.-" evidence="1"/>
<dbReference type="EMBL" id="AE007317">
    <property type="protein sequence ID" value="AAL00823.1"/>
    <property type="molecule type" value="Genomic_DNA"/>
</dbReference>
<dbReference type="PIR" id="B98124">
    <property type="entry name" value="B98124"/>
</dbReference>
<dbReference type="PIR" id="G95258">
    <property type="entry name" value="G95258"/>
</dbReference>
<dbReference type="RefSeq" id="NP_359612.1">
    <property type="nucleotide sequence ID" value="NC_003098.1"/>
</dbReference>
<dbReference type="RefSeq" id="WP_000727012.1">
    <property type="nucleotide sequence ID" value="NC_003098.1"/>
</dbReference>
<dbReference type="PDB" id="4CGK">
    <property type="method" value="X-ray"/>
    <property type="resolution" value="2.55 A"/>
    <property type="chains" value="A/B=1-392"/>
</dbReference>
<dbReference type="PDBsum" id="4CGK"/>
<dbReference type="SMR" id="Q8DMY4"/>
<dbReference type="STRING" id="171101.spr2021"/>
<dbReference type="GeneID" id="45652564"/>
<dbReference type="KEGG" id="spr:spr2021"/>
<dbReference type="PATRIC" id="fig|171101.6.peg.2187"/>
<dbReference type="eggNOG" id="COG3883">
    <property type="taxonomic scope" value="Bacteria"/>
</dbReference>
<dbReference type="eggNOG" id="COG3942">
    <property type="taxonomic scope" value="Bacteria"/>
</dbReference>
<dbReference type="HOGENOM" id="CLU_034085_2_2_9"/>
<dbReference type="Proteomes" id="UP000000586">
    <property type="component" value="Chromosome"/>
</dbReference>
<dbReference type="GO" id="GO:0030428">
    <property type="term" value="C:cell septum"/>
    <property type="evidence" value="ECO:0007669"/>
    <property type="project" value="UniProtKB-SubCell"/>
</dbReference>
<dbReference type="GO" id="GO:0005576">
    <property type="term" value="C:extracellular region"/>
    <property type="evidence" value="ECO:0007669"/>
    <property type="project" value="UniProtKB-SubCell"/>
</dbReference>
<dbReference type="GO" id="GO:0005886">
    <property type="term" value="C:plasma membrane"/>
    <property type="evidence" value="ECO:0007669"/>
    <property type="project" value="UniProtKB-SubCell"/>
</dbReference>
<dbReference type="GO" id="GO:0016787">
    <property type="term" value="F:hydrolase activity"/>
    <property type="evidence" value="ECO:0007669"/>
    <property type="project" value="UniProtKB-KW"/>
</dbReference>
<dbReference type="Gene3D" id="6.10.250.3150">
    <property type="match status" value="1"/>
</dbReference>
<dbReference type="Gene3D" id="3.90.1720.10">
    <property type="entry name" value="endopeptidase domain like (from Nostoc punctiforme)"/>
    <property type="match status" value="1"/>
</dbReference>
<dbReference type="InterPro" id="IPR007921">
    <property type="entry name" value="CHAP_dom"/>
</dbReference>
<dbReference type="InterPro" id="IPR038765">
    <property type="entry name" value="Papain-like_cys_pep_sf"/>
</dbReference>
<dbReference type="InterPro" id="IPR009148">
    <property type="entry name" value="PcsB-like"/>
</dbReference>
<dbReference type="NCBIfam" id="NF046104">
    <property type="entry name" value="PptglHdxlasePcsB"/>
    <property type="match status" value="1"/>
</dbReference>
<dbReference type="Pfam" id="PF24568">
    <property type="entry name" value="CC_PcsB"/>
    <property type="match status" value="1"/>
</dbReference>
<dbReference type="Pfam" id="PF05257">
    <property type="entry name" value="CHAP"/>
    <property type="match status" value="1"/>
</dbReference>
<dbReference type="PRINTS" id="PR01852">
    <property type="entry name" value="SIBAPROTEIN"/>
</dbReference>
<dbReference type="SUPFAM" id="SSF54001">
    <property type="entry name" value="Cysteine proteinases"/>
    <property type="match status" value="1"/>
</dbReference>
<dbReference type="PROSITE" id="PS50911">
    <property type="entry name" value="CHAP"/>
    <property type="match status" value="1"/>
</dbReference>
<proteinExistence type="evidence at protein level"/>
<comment type="function">
    <text evidence="4 5 7 9">Peptidoglycan-hydrolase activity (PubMed:24804636). Required in maintaining normal growth and cellular morphology (PubMed:14651645, PubMed:15306019, PubMed:19270090). Involved in splitting of the septum during cell division (PubMed:24804636).</text>
</comment>
<comment type="activity regulation">
    <text evidence="1 9">Lacks peptidoglycan-hydrolase activity in vitro, probably due to auto-inhibition by the CC domain (By similarity). In the homodimer, interaction between the CC domain in one monomer and the hydrolase active site in the peptidase C51/CHAP domain in the other monomer probably mediates auto-inhibition of the hydrolase activity (PubMed:24804636).</text>
</comment>
<comment type="subunit">
    <text evidence="1 8">Homodimer (By similarity). Interacts (via N-terminal coiled coil domain) with FtsX (via large extracellular loop) (PubMed:22006325). This interaction directs PcsB to equatorial and septal sites of dividing cells (By similarity). Interacts with FtsE (PubMed:22006325).</text>
</comment>
<comment type="subcellular location">
    <subcellularLocation>
        <location evidence="6">Cell membrane</location>
        <topology evidence="14">Peripheral membrane protein</topology>
        <orientation evidence="14">Extracellular side</orientation>
    </subcellularLocation>
    <subcellularLocation>
        <location evidence="1">Cell septum</location>
    </subcellularLocation>
    <subcellularLocation>
        <location evidence="1">Secreted</location>
    </subcellularLocation>
    <text evidence="14">Localizes to outer membrane surface, probably due to hydrophobic interactions.</text>
</comment>
<comment type="domain">
    <text evidence="8 9">Putative leucine-zipper in coiled-coil (CC) domain essential for function (PubMed:22006325). CC domain probably acts to inhibit peptidoglycan-hydrolase activity of the peptidase C51/CHAP domain (PubMed:24804636).</text>
</comment>
<comment type="domain">
    <text evidence="9">Peptidase C51/CHAP domain has peptidoglycan-hydrolase activity.</text>
</comment>
<comment type="disruption phenotype">
    <text evidence="7">Non-viable.</text>
</comment>
<comment type="caution">
    <text evidence="12">Other strains, such as TIGR4 and PJ-1259, are viable following gene deletion, but have growth defects.</text>
</comment>
<gene>
    <name evidence="10" type="primary">pcsB</name>
    <name evidence="15" type="synonym">gsp-781</name>
    <name evidence="15" type="ordered locus">spr2021</name>
</gene>
<reference evidence="16" key="1">
    <citation type="journal article" date="2001" name="J. Bacteriol.">
        <title>Genome of the bacterium Streptococcus pneumoniae strain R6.</title>
        <authorList>
            <person name="Hoskins J."/>
            <person name="Alborn W.E. Jr."/>
            <person name="Arnold J."/>
            <person name="Blaszczak L.C."/>
            <person name="Burgett S."/>
            <person name="DeHoff B.S."/>
            <person name="Estrem S.T."/>
            <person name="Fritz L."/>
            <person name="Fu D.-J."/>
            <person name="Fuller W."/>
            <person name="Geringer C."/>
            <person name="Gilmour R."/>
            <person name="Glass J.S."/>
            <person name="Khoja H."/>
            <person name="Kraft A.R."/>
            <person name="Lagace R.E."/>
            <person name="LeBlanc D.J."/>
            <person name="Lee L.N."/>
            <person name="Lefkowitz E.J."/>
            <person name="Lu J."/>
            <person name="Matsushima P."/>
            <person name="McAhren S.M."/>
            <person name="McHenney M."/>
            <person name="McLeaster K."/>
            <person name="Mundy C.W."/>
            <person name="Nicas T.I."/>
            <person name="Norris F.H."/>
            <person name="O'Gara M."/>
            <person name="Peery R.B."/>
            <person name="Robertson G.T."/>
            <person name="Rockey P."/>
            <person name="Sun P.-M."/>
            <person name="Winkler M.E."/>
            <person name="Yang Y."/>
            <person name="Young-Bellido M."/>
            <person name="Zhao G."/>
            <person name="Zook C.A."/>
            <person name="Baltz R.H."/>
            <person name="Jaskunas S.R."/>
            <person name="Rosteck P.R. Jr."/>
            <person name="Skatrud P.L."/>
            <person name="Glass J.I."/>
        </authorList>
    </citation>
    <scope>NUCLEOTIDE SEQUENCE [LARGE SCALE GENOMIC DNA]</scope>
    <source>
        <strain evidence="16">ATCC BAA-255 / R6</strain>
    </source>
</reference>
<reference evidence="13" key="2">
    <citation type="journal article" date="2003" name="Mol. Microbiol.">
        <title>Constitutive expression of PcsB suppresses the requirement for the essential VicR (YycF) response regulator in Streptococcus pneumoniae R6.</title>
        <authorList>
            <person name="Ng W.L."/>
            <person name="Robertson G.T."/>
            <person name="Kazmierczak K.M."/>
            <person name="Zhao J."/>
            <person name="Gilmour R."/>
            <person name="Winkler M.E."/>
        </authorList>
    </citation>
    <scope>FUNCTION</scope>
</reference>
<reference evidence="13" key="3">
    <citation type="journal article" date="2004" name="Mol. Microbiol.">
        <title>Defective cell wall synthesis in Streptococcus pneumoniae R6 depleted for the essential PcsB putative murein hydrolase or the VicR (YycF) response regulator.</title>
        <authorList>
            <person name="Ng W.L."/>
            <person name="Kazmierczak K.M."/>
            <person name="Winkler M.E."/>
        </authorList>
    </citation>
    <scope>FUNCTION</scope>
</reference>
<reference evidence="13" key="4">
    <citation type="journal article" date="2007" name="J. Bacteriol.">
        <title>Localization of PcsB of Streptococcus pneumoniae and its differential expression in response to stress.</title>
        <authorList>
            <person name="Mills M.F."/>
            <person name="Marquart M.E."/>
            <person name="McDaniel L.S."/>
        </authorList>
    </citation>
    <scope>SUBCELLULAR LOCATION</scope>
    <source>
        <strain>JD908</strain>
        <strain>WU2</strain>
    </source>
</reference>
<reference evidence="13" key="5">
    <citation type="journal article" date="2009" name="J. Bacteriol.">
        <title>Influences of capsule on cell shape and chain formation of wild-type and pcsB mutants of serotype 2 Streptococcus pneumoniae.</title>
        <authorList>
            <person name="Barendt S.M."/>
            <person name="Land A.D."/>
            <person name="Sham L.T."/>
            <person name="Ng W.L."/>
            <person name="Tsui H.C."/>
            <person name="Arnold R.J."/>
            <person name="Winkler M.E."/>
        </authorList>
    </citation>
    <scope>FUNCTION</scope>
    <scope>DISRUPTION PHENOTYPE</scope>
</reference>
<reference evidence="13" key="6">
    <citation type="journal article" date="2011" name="Proc. Natl. Acad. Sci. U.S.A.">
        <title>Essential PcsB putative peptidoglycan hydrolase interacts with the essential FtsXSpn cell division protein in Streptococcus pneumoniae D39.</title>
        <authorList>
            <person name="Sham L.T."/>
            <person name="Barendt S.M."/>
            <person name="Kopecky K.E."/>
            <person name="Winkler M.E."/>
        </authorList>
    </citation>
    <scope>INTERACTION WITH FTSX AND FTSE</scope>
    <scope>SUBCELLULAR LOCATION</scope>
    <scope>DOMAIN</scope>
    <scope>IDENTIFICATION BY MASS SPECTROMETRY</scope>
</reference>
<reference evidence="17" key="7">
    <citation type="journal article" date="2014" name="Nat. Commun.">
        <title>Structural basis of PcsB-mediated cell separation in Streptococcus pneumoniae.</title>
        <authorList>
            <person name="Bartual S.G."/>
            <person name="Straume D."/>
            <person name="Stamsas G.A."/>
            <person name="Munoz I.G."/>
            <person name="Alfonso C."/>
            <person name="Martinez-Ripoll M."/>
            <person name="Havarstein L.S."/>
            <person name="Hermoso J.A."/>
        </authorList>
    </citation>
    <scope>X-RAY CRYSTALLOGRAPHY (2.55 ANGSTROMS)</scope>
    <scope>FUNCTION</scope>
    <scope>ACTIVITY REGULATION</scope>
</reference>
<feature type="signal peptide" evidence="2">
    <location>
        <begin position="1"/>
        <end position="27"/>
    </location>
</feature>
<feature type="chain" id="PRO_5004304354" description="Peptidoglycan hydrolase PcsB" evidence="2">
    <location>
        <begin position="28"/>
        <end position="392"/>
    </location>
</feature>
<feature type="domain" description="Peptidase C51" evidence="3">
    <location>
        <begin position="267"/>
        <end position="390"/>
    </location>
</feature>
<feature type="region of interest" description="Interacts with large extracellular loop of FtsX" evidence="1">
    <location>
        <begin position="47"/>
        <end position="267"/>
    </location>
</feature>
<feature type="coiled-coil region" evidence="2">
    <location>
        <begin position="34"/>
        <end position="96"/>
    </location>
</feature>
<feature type="coiled-coil region" evidence="2">
    <location>
        <begin position="191"/>
        <end position="227"/>
    </location>
</feature>